<gene>
    <name evidence="1" type="primary">eno</name>
    <name type="ordered locus">Dgeo_0004</name>
</gene>
<sequence>MNIEKVIAREVLDSRGNPTVEAEVFLDSGFSGRAIVPSGASTGTHEALELRDGDGRYGGKGVLRAVQNVNEVLAPALVGLDASEQGAVDAAMLALDGTPNKGRLGGNAILAVSLATARAAANELGVPLYRYLGGSNAKTLPVPMMNVINGGAHADNNVDFQEFMVMPVGAPTFREALRYGAETFHALKKVLAGRGYNTNVGDEGGFAPDLKSNEEALEVLLEAIEKAGYEPGKDIAIALDPATTELYRDGQYHLESEGRSLSTAEMVDFWADWVSRYPIVSIEDGLAEDDWDGWRLLTERLGDRVQLVGDDLFVTNPERLARGIETGVGNAILVKVNQIGTLTESMDAIELAKRSRYGTIISHRSGESEDAFIADLAVATNAGQIKTGSASRSDRIAKYNQLLRIEDGLGDRAVYLGRRALR</sequence>
<comment type="function">
    <text evidence="1">Catalyzes the reversible conversion of 2-phosphoglycerate (2-PG) into phosphoenolpyruvate (PEP). It is essential for the degradation of carbohydrates via glycolysis.</text>
</comment>
<comment type="catalytic activity">
    <reaction evidence="1">
        <text>(2R)-2-phosphoglycerate = phosphoenolpyruvate + H2O</text>
        <dbReference type="Rhea" id="RHEA:10164"/>
        <dbReference type="ChEBI" id="CHEBI:15377"/>
        <dbReference type="ChEBI" id="CHEBI:58289"/>
        <dbReference type="ChEBI" id="CHEBI:58702"/>
        <dbReference type="EC" id="4.2.1.11"/>
    </reaction>
</comment>
<comment type="cofactor">
    <cofactor evidence="1">
        <name>Mg(2+)</name>
        <dbReference type="ChEBI" id="CHEBI:18420"/>
    </cofactor>
    <text evidence="1">Binds a second Mg(2+) ion via substrate during catalysis.</text>
</comment>
<comment type="pathway">
    <text evidence="1">Carbohydrate degradation; glycolysis; pyruvate from D-glyceraldehyde 3-phosphate: step 4/5.</text>
</comment>
<comment type="subcellular location">
    <subcellularLocation>
        <location evidence="1">Cytoplasm</location>
    </subcellularLocation>
    <subcellularLocation>
        <location evidence="1">Secreted</location>
    </subcellularLocation>
    <subcellularLocation>
        <location evidence="1">Cell surface</location>
    </subcellularLocation>
    <text evidence="1">Fractions of enolase are present in both the cytoplasm and on the cell surface.</text>
</comment>
<comment type="similarity">
    <text evidence="1">Belongs to the enolase family.</text>
</comment>
<organism>
    <name type="scientific">Deinococcus geothermalis (strain DSM 11300 / CIP 105573 / AG-3a)</name>
    <dbReference type="NCBI Taxonomy" id="319795"/>
    <lineage>
        <taxon>Bacteria</taxon>
        <taxon>Thermotogati</taxon>
        <taxon>Deinococcota</taxon>
        <taxon>Deinococci</taxon>
        <taxon>Deinococcales</taxon>
        <taxon>Deinococcaceae</taxon>
        <taxon>Deinococcus</taxon>
    </lineage>
</organism>
<feature type="chain" id="PRO_0000267027" description="Enolase">
    <location>
        <begin position="1"/>
        <end position="422"/>
    </location>
</feature>
<feature type="active site" description="Proton donor" evidence="1">
    <location>
        <position position="203"/>
    </location>
</feature>
<feature type="active site" description="Proton acceptor" evidence="1">
    <location>
        <position position="335"/>
    </location>
</feature>
<feature type="binding site" evidence="1">
    <location>
        <position position="161"/>
    </location>
    <ligand>
        <name>(2R)-2-phosphoglycerate</name>
        <dbReference type="ChEBI" id="CHEBI:58289"/>
    </ligand>
</feature>
<feature type="binding site" evidence="1">
    <location>
        <position position="240"/>
    </location>
    <ligand>
        <name>Mg(2+)</name>
        <dbReference type="ChEBI" id="CHEBI:18420"/>
    </ligand>
</feature>
<feature type="binding site" evidence="1">
    <location>
        <position position="283"/>
    </location>
    <ligand>
        <name>Mg(2+)</name>
        <dbReference type="ChEBI" id="CHEBI:18420"/>
    </ligand>
</feature>
<feature type="binding site" evidence="1">
    <location>
        <position position="310"/>
    </location>
    <ligand>
        <name>Mg(2+)</name>
        <dbReference type="ChEBI" id="CHEBI:18420"/>
    </ligand>
</feature>
<feature type="binding site" evidence="1">
    <location>
        <position position="335"/>
    </location>
    <ligand>
        <name>(2R)-2-phosphoglycerate</name>
        <dbReference type="ChEBI" id="CHEBI:58289"/>
    </ligand>
</feature>
<feature type="binding site" evidence="1">
    <location>
        <position position="364"/>
    </location>
    <ligand>
        <name>(2R)-2-phosphoglycerate</name>
        <dbReference type="ChEBI" id="CHEBI:58289"/>
    </ligand>
</feature>
<feature type="binding site" evidence="1">
    <location>
        <position position="365"/>
    </location>
    <ligand>
        <name>(2R)-2-phosphoglycerate</name>
        <dbReference type="ChEBI" id="CHEBI:58289"/>
    </ligand>
</feature>
<feature type="binding site" evidence="1">
    <location>
        <position position="386"/>
    </location>
    <ligand>
        <name>(2R)-2-phosphoglycerate</name>
        <dbReference type="ChEBI" id="CHEBI:58289"/>
    </ligand>
</feature>
<proteinExistence type="inferred from homology"/>
<evidence type="ECO:0000255" key="1">
    <source>
        <dbReference type="HAMAP-Rule" id="MF_00318"/>
    </source>
</evidence>
<name>ENO_DEIGD</name>
<protein>
    <recommendedName>
        <fullName evidence="1">Enolase</fullName>
        <ecNumber evidence="1">4.2.1.11</ecNumber>
    </recommendedName>
    <alternativeName>
        <fullName evidence="1">2-phospho-D-glycerate hydro-lyase</fullName>
    </alternativeName>
    <alternativeName>
        <fullName evidence="1">2-phosphoglycerate dehydratase</fullName>
    </alternativeName>
</protein>
<accession>Q1J2H6</accession>
<keyword id="KW-0963">Cytoplasm</keyword>
<keyword id="KW-0324">Glycolysis</keyword>
<keyword id="KW-0456">Lyase</keyword>
<keyword id="KW-0460">Magnesium</keyword>
<keyword id="KW-0479">Metal-binding</keyword>
<keyword id="KW-0964">Secreted</keyword>
<dbReference type="EC" id="4.2.1.11" evidence="1"/>
<dbReference type="EMBL" id="CP000359">
    <property type="protein sequence ID" value="ABF44308.1"/>
    <property type="molecule type" value="Genomic_DNA"/>
</dbReference>
<dbReference type="RefSeq" id="WP_011529155.1">
    <property type="nucleotide sequence ID" value="NC_008025.1"/>
</dbReference>
<dbReference type="SMR" id="Q1J2H6"/>
<dbReference type="STRING" id="319795.Dgeo_0004"/>
<dbReference type="KEGG" id="dge:Dgeo_0004"/>
<dbReference type="eggNOG" id="COG0148">
    <property type="taxonomic scope" value="Bacteria"/>
</dbReference>
<dbReference type="HOGENOM" id="CLU_031223_2_1_0"/>
<dbReference type="UniPathway" id="UPA00109">
    <property type="reaction ID" value="UER00187"/>
</dbReference>
<dbReference type="Proteomes" id="UP000002431">
    <property type="component" value="Chromosome"/>
</dbReference>
<dbReference type="GO" id="GO:0009986">
    <property type="term" value="C:cell surface"/>
    <property type="evidence" value="ECO:0007669"/>
    <property type="project" value="UniProtKB-SubCell"/>
</dbReference>
<dbReference type="GO" id="GO:0005576">
    <property type="term" value="C:extracellular region"/>
    <property type="evidence" value="ECO:0007669"/>
    <property type="project" value="UniProtKB-SubCell"/>
</dbReference>
<dbReference type="GO" id="GO:0000015">
    <property type="term" value="C:phosphopyruvate hydratase complex"/>
    <property type="evidence" value="ECO:0007669"/>
    <property type="project" value="InterPro"/>
</dbReference>
<dbReference type="GO" id="GO:0000287">
    <property type="term" value="F:magnesium ion binding"/>
    <property type="evidence" value="ECO:0007669"/>
    <property type="project" value="UniProtKB-UniRule"/>
</dbReference>
<dbReference type="GO" id="GO:0004634">
    <property type="term" value="F:phosphopyruvate hydratase activity"/>
    <property type="evidence" value="ECO:0007669"/>
    <property type="project" value="UniProtKB-UniRule"/>
</dbReference>
<dbReference type="GO" id="GO:0006096">
    <property type="term" value="P:glycolytic process"/>
    <property type="evidence" value="ECO:0007669"/>
    <property type="project" value="UniProtKB-UniRule"/>
</dbReference>
<dbReference type="CDD" id="cd03313">
    <property type="entry name" value="enolase"/>
    <property type="match status" value="1"/>
</dbReference>
<dbReference type="FunFam" id="3.20.20.120:FF:000001">
    <property type="entry name" value="Enolase"/>
    <property type="match status" value="1"/>
</dbReference>
<dbReference type="FunFam" id="3.30.390.10:FF:000001">
    <property type="entry name" value="Enolase"/>
    <property type="match status" value="1"/>
</dbReference>
<dbReference type="Gene3D" id="3.20.20.120">
    <property type="entry name" value="Enolase-like C-terminal domain"/>
    <property type="match status" value="1"/>
</dbReference>
<dbReference type="Gene3D" id="3.30.390.10">
    <property type="entry name" value="Enolase-like, N-terminal domain"/>
    <property type="match status" value="1"/>
</dbReference>
<dbReference type="HAMAP" id="MF_00318">
    <property type="entry name" value="Enolase"/>
    <property type="match status" value="1"/>
</dbReference>
<dbReference type="InterPro" id="IPR000941">
    <property type="entry name" value="Enolase"/>
</dbReference>
<dbReference type="InterPro" id="IPR036849">
    <property type="entry name" value="Enolase-like_C_sf"/>
</dbReference>
<dbReference type="InterPro" id="IPR029017">
    <property type="entry name" value="Enolase-like_N"/>
</dbReference>
<dbReference type="InterPro" id="IPR020810">
    <property type="entry name" value="Enolase_C"/>
</dbReference>
<dbReference type="InterPro" id="IPR020809">
    <property type="entry name" value="Enolase_CS"/>
</dbReference>
<dbReference type="InterPro" id="IPR020811">
    <property type="entry name" value="Enolase_N"/>
</dbReference>
<dbReference type="NCBIfam" id="TIGR01060">
    <property type="entry name" value="eno"/>
    <property type="match status" value="1"/>
</dbReference>
<dbReference type="PANTHER" id="PTHR11902">
    <property type="entry name" value="ENOLASE"/>
    <property type="match status" value="1"/>
</dbReference>
<dbReference type="PANTHER" id="PTHR11902:SF1">
    <property type="entry name" value="ENOLASE"/>
    <property type="match status" value="1"/>
</dbReference>
<dbReference type="Pfam" id="PF00113">
    <property type="entry name" value="Enolase_C"/>
    <property type="match status" value="1"/>
</dbReference>
<dbReference type="Pfam" id="PF03952">
    <property type="entry name" value="Enolase_N"/>
    <property type="match status" value="1"/>
</dbReference>
<dbReference type="PIRSF" id="PIRSF001400">
    <property type="entry name" value="Enolase"/>
    <property type="match status" value="1"/>
</dbReference>
<dbReference type="PRINTS" id="PR00148">
    <property type="entry name" value="ENOLASE"/>
</dbReference>
<dbReference type="SFLD" id="SFLDS00001">
    <property type="entry name" value="Enolase"/>
    <property type="match status" value="1"/>
</dbReference>
<dbReference type="SFLD" id="SFLDF00002">
    <property type="entry name" value="enolase"/>
    <property type="match status" value="1"/>
</dbReference>
<dbReference type="SMART" id="SM01192">
    <property type="entry name" value="Enolase_C"/>
    <property type="match status" value="1"/>
</dbReference>
<dbReference type="SMART" id="SM01193">
    <property type="entry name" value="Enolase_N"/>
    <property type="match status" value="1"/>
</dbReference>
<dbReference type="SUPFAM" id="SSF51604">
    <property type="entry name" value="Enolase C-terminal domain-like"/>
    <property type="match status" value="1"/>
</dbReference>
<dbReference type="SUPFAM" id="SSF54826">
    <property type="entry name" value="Enolase N-terminal domain-like"/>
    <property type="match status" value="1"/>
</dbReference>
<dbReference type="PROSITE" id="PS00164">
    <property type="entry name" value="ENOLASE"/>
    <property type="match status" value="1"/>
</dbReference>
<reference key="1">
    <citation type="submission" date="2006-04" db="EMBL/GenBank/DDBJ databases">
        <title>Complete sequence of chromosome of Deinococcus geothermalis DSM 11300.</title>
        <authorList>
            <person name="Copeland A."/>
            <person name="Lucas S."/>
            <person name="Lapidus A."/>
            <person name="Barry K."/>
            <person name="Detter J.C."/>
            <person name="Glavina del Rio T."/>
            <person name="Hammon N."/>
            <person name="Israni S."/>
            <person name="Dalin E."/>
            <person name="Tice H."/>
            <person name="Pitluck S."/>
            <person name="Brettin T."/>
            <person name="Bruce D."/>
            <person name="Han C."/>
            <person name="Tapia R."/>
            <person name="Saunders E."/>
            <person name="Gilna P."/>
            <person name="Schmutz J."/>
            <person name="Larimer F."/>
            <person name="Land M."/>
            <person name="Hauser L."/>
            <person name="Kyrpides N."/>
            <person name="Kim E."/>
            <person name="Daly M.J."/>
            <person name="Fredrickson J.K."/>
            <person name="Makarova K.S."/>
            <person name="Gaidamakova E.K."/>
            <person name="Zhai M."/>
            <person name="Richardson P."/>
        </authorList>
    </citation>
    <scope>NUCLEOTIDE SEQUENCE [LARGE SCALE GENOMIC DNA]</scope>
    <source>
        <strain>DSM 11300 / CIP 105573 / AG-3a</strain>
    </source>
</reference>